<gene>
    <name evidence="1" type="primary">groEL</name>
    <name type="synonym">groE</name>
    <name evidence="1" type="synonym">groL</name>
    <name type="ordered locus">CTC_02413</name>
</gene>
<evidence type="ECO:0000255" key="1">
    <source>
        <dbReference type="HAMAP-Rule" id="MF_00600"/>
    </source>
</evidence>
<feature type="chain" id="PRO_0000063343" description="Chaperonin GroEL">
    <location>
        <begin position="1"/>
        <end position="543"/>
    </location>
</feature>
<feature type="binding site" evidence="1">
    <location>
        <begin position="31"/>
        <end position="34"/>
    </location>
    <ligand>
        <name>ATP</name>
        <dbReference type="ChEBI" id="CHEBI:30616"/>
    </ligand>
</feature>
<feature type="binding site" evidence="1">
    <location>
        <begin position="88"/>
        <end position="92"/>
    </location>
    <ligand>
        <name>ATP</name>
        <dbReference type="ChEBI" id="CHEBI:30616"/>
    </ligand>
</feature>
<feature type="binding site" evidence="1">
    <location>
        <position position="415"/>
    </location>
    <ligand>
        <name>ATP</name>
        <dbReference type="ChEBI" id="CHEBI:30616"/>
    </ligand>
</feature>
<feature type="binding site" evidence="1">
    <location>
        <begin position="479"/>
        <end position="481"/>
    </location>
    <ligand>
        <name>ATP</name>
        <dbReference type="ChEBI" id="CHEBI:30616"/>
    </ligand>
</feature>
<feature type="binding site" evidence="1">
    <location>
        <position position="495"/>
    </location>
    <ligand>
        <name>ATP</name>
        <dbReference type="ChEBI" id="CHEBI:30616"/>
    </ligand>
</feature>
<accession>Q891G4</accession>
<proteinExistence type="inferred from homology"/>
<organism>
    <name type="scientific">Clostridium tetani (strain Massachusetts / E88)</name>
    <dbReference type="NCBI Taxonomy" id="212717"/>
    <lineage>
        <taxon>Bacteria</taxon>
        <taxon>Bacillati</taxon>
        <taxon>Bacillota</taxon>
        <taxon>Clostridia</taxon>
        <taxon>Eubacteriales</taxon>
        <taxon>Clostridiaceae</taxon>
        <taxon>Clostridium</taxon>
    </lineage>
</organism>
<protein>
    <recommendedName>
        <fullName evidence="1">Chaperonin GroEL</fullName>
        <ecNumber evidence="1">5.6.1.7</ecNumber>
    </recommendedName>
    <alternativeName>
        <fullName evidence="1">60 kDa chaperonin</fullName>
    </alternativeName>
    <alternativeName>
        <fullName evidence="1">Chaperonin-60</fullName>
        <shortName evidence="1">Cpn60</shortName>
    </alternativeName>
</protein>
<sequence length="543" mass="58467">MEMAKSIMFGEDARRSMQKGVDILADTVKVTMGPKGRNVVLDKKFGAPLITNDGVTIAREIELEDAYENMGAQLVKEVATKTNDVAGDGTTTATLLAQAIIREGLKNVTGGANPMLVRRGIQMAVEEAVKGIKEISKPVEGKEDIARVAAISADDKEIGKLIADAMEKVGNEGVITVEESNTMGTELDVVEGMQFDRGYVSPYMVTDTEKMEASLDDAYILITDKKITNIQEILPVLEQIVQQGKRLLIISEDIEGEALATLVVNKLRGTFTCVAVKAPGFGDRRKEMLEDIATLTGGQVISEEIGRDLKDVTVDMLGRAESVKITKETTTIVNGKGNKKEIEDRVNQIKAQIEETTSEFDREKLQERLAKLAGGVAVIKVGAATETELKERKLRIEDALAATKAAVEEGIIPGGGTAYAMVIKEVEKLNSETHDIKLGIDIVKKSLEEPVRQIACNAGVEGSIVIEKVKHSEAGIGYDALNNEYVNMIKAGIVDPTKVSRSALQNAASVASTFLTTEAAIADIPEKNDTPMPGAPGMMDGMY</sequence>
<dbReference type="EC" id="5.6.1.7" evidence="1"/>
<dbReference type="EMBL" id="AE015927">
    <property type="protein sequence ID" value="AAO36881.1"/>
    <property type="molecule type" value="Genomic_DNA"/>
</dbReference>
<dbReference type="SMR" id="Q891G4"/>
<dbReference type="STRING" id="212717.CTC_02413"/>
<dbReference type="KEGG" id="ctc:CTC_02413"/>
<dbReference type="HOGENOM" id="CLU_016503_6_1_9"/>
<dbReference type="Proteomes" id="UP000001412">
    <property type="component" value="Chromosome"/>
</dbReference>
<dbReference type="GO" id="GO:0005737">
    <property type="term" value="C:cytoplasm"/>
    <property type="evidence" value="ECO:0007669"/>
    <property type="project" value="UniProtKB-SubCell"/>
</dbReference>
<dbReference type="GO" id="GO:0005524">
    <property type="term" value="F:ATP binding"/>
    <property type="evidence" value="ECO:0007669"/>
    <property type="project" value="UniProtKB-UniRule"/>
</dbReference>
<dbReference type="GO" id="GO:0140662">
    <property type="term" value="F:ATP-dependent protein folding chaperone"/>
    <property type="evidence" value="ECO:0007669"/>
    <property type="project" value="InterPro"/>
</dbReference>
<dbReference type="GO" id="GO:0016853">
    <property type="term" value="F:isomerase activity"/>
    <property type="evidence" value="ECO:0007669"/>
    <property type="project" value="UniProtKB-KW"/>
</dbReference>
<dbReference type="GO" id="GO:0051082">
    <property type="term" value="F:unfolded protein binding"/>
    <property type="evidence" value="ECO:0007669"/>
    <property type="project" value="UniProtKB-UniRule"/>
</dbReference>
<dbReference type="GO" id="GO:0042026">
    <property type="term" value="P:protein refolding"/>
    <property type="evidence" value="ECO:0007669"/>
    <property type="project" value="UniProtKB-UniRule"/>
</dbReference>
<dbReference type="CDD" id="cd03344">
    <property type="entry name" value="GroEL"/>
    <property type="match status" value="1"/>
</dbReference>
<dbReference type="FunFam" id="3.50.7.10:FF:000001">
    <property type="entry name" value="60 kDa chaperonin"/>
    <property type="match status" value="1"/>
</dbReference>
<dbReference type="Gene3D" id="3.50.7.10">
    <property type="entry name" value="GroEL"/>
    <property type="match status" value="1"/>
</dbReference>
<dbReference type="Gene3D" id="1.10.560.10">
    <property type="entry name" value="GroEL-like equatorial domain"/>
    <property type="match status" value="1"/>
</dbReference>
<dbReference type="Gene3D" id="3.30.260.10">
    <property type="entry name" value="TCP-1-like chaperonin intermediate domain"/>
    <property type="match status" value="1"/>
</dbReference>
<dbReference type="HAMAP" id="MF_00600">
    <property type="entry name" value="CH60"/>
    <property type="match status" value="1"/>
</dbReference>
<dbReference type="InterPro" id="IPR018370">
    <property type="entry name" value="Chaperonin_Cpn60_CS"/>
</dbReference>
<dbReference type="InterPro" id="IPR001844">
    <property type="entry name" value="Cpn60/GroEL"/>
</dbReference>
<dbReference type="InterPro" id="IPR002423">
    <property type="entry name" value="Cpn60/GroEL/TCP-1"/>
</dbReference>
<dbReference type="InterPro" id="IPR027409">
    <property type="entry name" value="GroEL-like_apical_dom_sf"/>
</dbReference>
<dbReference type="InterPro" id="IPR027413">
    <property type="entry name" value="GROEL-like_equatorial_sf"/>
</dbReference>
<dbReference type="InterPro" id="IPR027410">
    <property type="entry name" value="TCP-1-like_intermed_sf"/>
</dbReference>
<dbReference type="NCBIfam" id="TIGR02348">
    <property type="entry name" value="GroEL"/>
    <property type="match status" value="1"/>
</dbReference>
<dbReference type="NCBIfam" id="NF000592">
    <property type="entry name" value="PRK00013.1"/>
    <property type="match status" value="1"/>
</dbReference>
<dbReference type="NCBIfam" id="NF009487">
    <property type="entry name" value="PRK12849.1"/>
    <property type="match status" value="1"/>
</dbReference>
<dbReference type="NCBIfam" id="NF009488">
    <property type="entry name" value="PRK12850.1"/>
    <property type="match status" value="1"/>
</dbReference>
<dbReference type="NCBIfam" id="NF009489">
    <property type="entry name" value="PRK12851.1"/>
    <property type="match status" value="1"/>
</dbReference>
<dbReference type="PANTHER" id="PTHR45633">
    <property type="entry name" value="60 KDA HEAT SHOCK PROTEIN, MITOCHONDRIAL"/>
    <property type="match status" value="1"/>
</dbReference>
<dbReference type="Pfam" id="PF00118">
    <property type="entry name" value="Cpn60_TCP1"/>
    <property type="match status" value="1"/>
</dbReference>
<dbReference type="PRINTS" id="PR00298">
    <property type="entry name" value="CHAPERONIN60"/>
</dbReference>
<dbReference type="SUPFAM" id="SSF52029">
    <property type="entry name" value="GroEL apical domain-like"/>
    <property type="match status" value="1"/>
</dbReference>
<dbReference type="SUPFAM" id="SSF48592">
    <property type="entry name" value="GroEL equatorial domain-like"/>
    <property type="match status" value="1"/>
</dbReference>
<dbReference type="SUPFAM" id="SSF54849">
    <property type="entry name" value="GroEL-intermediate domain like"/>
    <property type="match status" value="1"/>
</dbReference>
<dbReference type="PROSITE" id="PS00296">
    <property type="entry name" value="CHAPERONINS_CPN60"/>
    <property type="match status" value="1"/>
</dbReference>
<name>CH60_CLOTE</name>
<keyword id="KW-0067">ATP-binding</keyword>
<keyword id="KW-0143">Chaperone</keyword>
<keyword id="KW-0963">Cytoplasm</keyword>
<keyword id="KW-0413">Isomerase</keyword>
<keyword id="KW-0547">Nucleotide-binding</keyword>
<keyword id="KW-1185">Reference proteome</keyword>
<comment type="function">
    <text evidence="1">Together with its co-chaperonin GroES, plays an essential role in assisting protein folding. The GroEL-GroES system forms a nano-cage that allows encapsulation of the non-native substrate proteins and provides a physical environment optimized to promote and accelerate protein folding.</text>
</comment>
<comment type="catalytic activity">
    <reaction evidence="1">
        <text>ATP + H2O + a folded polypeptide = ADP + phosphate + an unfolded polypeptide.</text>
        <dbReference type="EC" id="5.6.1.7"/>
    </reaction>
</comment>
<comment type="subunit">
    <text evidence="1">Forms a cylinder of 14 subunits composed of two heptameric rings stacked back-to-back. Interacts with the co-chaperonin GroES.</text>
</comment>
<comment type="subcellular location">
    <subcellularLocation>
        <location evidence="1">Cytoplasm</location>
    </subcellularLocation>
</comment>
<comment type="similarity">
    <text evidence="1">Belongs to the chaperonin (HSP60) family.</text>
</comment>
<reference key="1">
    <citation type="journal article" date="2003" name="Proc. Natl. Acad. Sci. U.S.A.">
        <title>The genome sequence of Clostridium tetani, the causative agent of tetanus disease.</title>
        <authorList>
            <person name="Brueggemann H."/>
            <person name="Baeumer S."/>
            <person name="Fricke W.F."/>
            <person name="Wiezer A."/>
            <person name="Liesegang H."/>
            <person name="Decker I."/>
            <person name="Herzberg C."/>
            <person name="Martinez-Arias R."/>
            <person name="Merkl R."/>
            <person name="Henne A."/>
            <person name="Gottschalk G."/>
        </authorList>
    </citation>
    <scope>NUCLEOTIDE SEQUENCE [LARGE SCALE GENOMIC DNA]</scope>
    <source>
        <strain>Massachusetts / E88</strain>
    </source>
</reference>